<name>TGT_BACAN</name>
<sequence length="379" mass="43227">MTAIRYEFIKTCKQTGARLGRVHTPHGSFDTPTFMPVGTLATVKTMSPEELKAMDSGIILSNTYHLWLRPGHEIIREAGGLHKFMNWDRAILTDSGGFQVFSLSDFRRIEEEGVHFRNHLNGDKLFLSPEKAMEIQNALGSDIMMAFDECPPFPATFEYMKKSVERTSRWAERCLKAHERPQDQGLFGIVQGGEFEELRRQSAKDLVSMDFPGYAVGGLSVGEPKDIMNRVLEFTTPLLPDNKPRYLMGVGSPDSLIDGAIRGIDMFDCVLPTRIARNGTCMTSEGRLVVKNAKFARDFGPLDPNCDCYTCKNYSRAYIRHLMKCDETFGIRLTSYHNLHFLLNLMEQVRQAIREDRLGDFREEFFEQYGFNKPNAKNF</sequence>
<comment type="function">
    <text evidence="1">Catalyzes the base-exchange of a guanine (G) residue with the queuine precursor 7-aminomethyl-7-deazaguanine (PreQ1) at position 34 (anticodon wobble position) in tRNAs with GU(N) anticodons (tRNA-Asp, -Asn, -His and -Tyr). Catalysis occurs through a double-displacement mechanism. The nucleophile active site attacks the C1' of nucleotide 34 to detach the guanine base from the RNA, forming a covalent enzyme-RNA intermediate. The proton acceptor active site deprotonates the incoming PreQ1, allowing a nucleophilic attack on the C1' of the ribose to form the product. After dissociation, two additional enzymatic reactions on the tRNA convert PreQ1 to queuine (Q), resulting in the hypermodified nucleoside queuosine (7-(((4,5-cis-dihydroxy-2-cyclopenten-1-yl)amino)methyl)-7-deazaguanosine).</text>
</comment>
<comment type="catalytic activity">
    <reaction evidence="1">
        <text>7-aminomethyl-7-carbaguanine + guanosine(34) in tRNA = 7-aminomethyl-7-carbaguanosine(34) in tRNA + guanine</text>
        <dbReference type="Rhea" id="RHEA:24104"/>
        <dbReference type="Rhea" id="RHEA-COMP:10341"/>
        <dbReference type="Rhea" id="RHEA-COMP:10342"/>
        <dbReference type="ChEBI" id="CHEBI:16235"/>
        <dbReference type="ChEBI" id="CHEBI:58703"/>
        <dbReference type="ChEBI" id="CHEBI:74269"/>
        <dbReference type="ChEBI" id="CHEBI:82833"/>
        <dbReference type="EC" id="2.4.2.29"/>
    </reaction>
</comment>
<comment type="cofactor">
    <cofactor evidence="1">
        <name>Zn(2+)</name>
        <dbReference type="ChEBI" id="CHEBI:29105"/>
    </cofactor>
    <text evidence="1">Binds 1 zinc ion per subunit.</text>
</comment>
<comment type="pathway">
    <text evidence="1">tRNA modification; tRNA-queuosine biosynthesis.</text>
</comment>
<comment type="subunit">
    <text evidence="1">Homodimer. Within each dimer, one monomer is responsible for RNA recognition and catalysis, while the other monomer binds to the replacement base PreQ1.</text>
</comment>
<comment type="similarity">
    <text evidence="1">Belongs to the queuine tRNA-ribosyltransferase family.</text>
</comment>
<gene>
    <name evidence="1" type="primary">tgt</name>
    <name type="ordered locus">BA_4647</name>
    <name type="ordered locus">GBAA_4647</name>
    <name type="ordered locus">BAS4312</name>
</gene>
<accession>Q81LH2</accession>
<accession>Q6HSX9</accession>
<accession>Q6KM67</accession>
<organism>
    <name type="scientific">Bacillus anthracis</name>
    <dbReference type="NCBI Taxonomy" id="1392"/>
    <lineage>
        <taxon>Bacteria</taxon>
        <taxon>Bacillati</taxon>
        <taxon>Bacillota</taxon>
        <taxon>Bacilli</taxon>
        <taxon>Bacillales</taxon>
        <taxon>Bacillaceae</taxon>
        <taxon>Bacillus</taxon>
        <taxon>Bacillus cereus group</taxon>
    </lineage>
</organism>
<dbReference type="EC" id="2.4.2.29" evidence="1"/>
<dbReference type="EMBL" id="AE016879">
    <property type="protein sequence ID" value="AAP28350.1"/>
    <property type="molecule type" value="Genomic_DNA"/>
</dbReference>
<dbReference type="EMBL" id="AE017334">
    <property type="protein sequence ID" value="AAT33769.1"/>
    <property type="molecule type" value="Genomic_DNA"/>
</dbReference>
<dbReference type="EMBL" id="AE017225">
    <property type="protein sequence ID" value="AAT56610.1"/>
    <property type="molecule type" value="Genomic_DNA"/>
</dbReference>
<dbReference type="RefSeq" id="NP_846864.1">
    <property type="nucleotide sequence ID" value="NC_003997.3"/>
</dbReference>
<dbReference type="RefSeq" id="WP_000125362.1">
    <property type="nucleotide sequence ID" value="NZ_WXXJ01000027.1"/>
</dbReference>
<dbReference type="RefSeq" id="YP_030559.1">
    <property type="nucleotide sequence ID" value="NC_005945.1"/>
</dbReference>
<dbReference type="SMR" id="Q81LH2"/>
<dbReference type="STRING" id="261594.GBAA_4647"/>
<dbReference type="DNASU" id="1084870"/>
<dbReference type="GeneID" id="92798989"/>
<dbReference type="KEGG" id="ban:BA_4647"/>
<dbReference type="KEGG" id="bar:GBAA_4647"/>
<dbReference type="KEGG" id="bat:BAS4312"/>
<dbReference type="PATRIC" id="fig|198094.11.peg.4612"/>
<dbReference type="eggNOG" id="COG0343">
    <property type="taxonomic scope" value="Bacteria"/>
</dbReference>
<dbReference type="HOGENOM" id="CLU_022060_0_1_9"/>
<dbReference type="OMA" id="IDLFDCV"/>
<dbReference type="OrthoDB" id="9805417at2"/>
<dbReference type="UniPathway" id="UPA00392"/>
<dbReference type="Proteomes" id="UP000000427">
    <property type="component" value="Chromosome"/>
</dbReference>
<dbReference type="Proteomes" id="UP000000594">
    <property type="component" value="Chromosome"/>
</dbReference>
<dbReference type="GO" id="GO:0005829">
    <property type="term" value="C:cytosol"/>
    <property type="evidence" value="ECO:0007669"/>
    <property type="project" value="TreeGrafter"/>
</dbReference>
<dbReference type="GO" id="GO:0046872">
    <property type="term" value="F:metal ion binding"/>
    <property type="evidence" value="ECO:0007669"/>
    <property type="project" value="UniProtKB-KW"/>
</dbReference>
<dbReference type="GO" id="GO:0008479">
    <property type="term" value="F:tRNA-guanosine(34) queuine transglycosylase activity"/>
    <property type="evidence" value="ECO:0007669"/>
    <property type="project" value="UniProtKB-UniRule"/>
</dbReference>
<dbReference type="GO" id="GO:0008616">
    <property type="term" value="P:queuosine biosynthetic process"/>
    <property type="evidence" value="ECO:0007669"/>
    <property type="project" value="UniProtKB-UniRule"/>
</dbReference>
<dbReference type="GO" id="GO:0002099">
    <property type="term" value="P:tRNA wobble guanine modification"/>
    <property type="evidence" value="ECO:0007669"/>
    <property type="project" value="TreeGrafter"/>
</dbReference>
<dbReference type="GO" id="GO:0101030">
    <property type="term" value="P:tRNA-guanine transglycosylation"/>
    <property type="evidence" value="ECO:0007669"/>
    <property type="project" value="InterPro"/>
</dbReference>
<dbReference type="FunFam" id="3.20.20.105:FF:000001">
    <property type="entry name" value="Queuine tRNA-ribosyltransferase"/>
    <property type="match status" value="1"/>
</dbReference>
<dbReference type="Gene3D" id="3.20.20.105">
    <property type="entry name" value="Queuine tRNA-ribosyltransferase-like"/>
    <property type="match status" value="1"/>
</dbReference>
<dbReference type="HAMAP" id="MF_00168">
    <property type="entry name" value="Q_tRNA_Tgt"/>
    <property type="match status" value="1"/>
</dbReference>
<dbReference type="InterPro" id="IPR050076">
    <property type="entry name" value="ArchSynthase1/Queuine_TRR"/>
</dbReference>
<dbReference type="InterPro" id="IPR004803">
    <property type="entry name" value="TGT"/>
</dbReference>
<dbReference type="InterPro" id="IPR036511">
    <property type="entry name" value="TGT-like_sf"/>
</dbReference>
<dbReference type="InterPro" id="IPR002616">
    <property type="entry name" value="tRNA_ribo_trans-like"/>
</dbReference>
<dbReference type="NCBIfam" id="TIGR00430">
    <property type="entry name" value="Q_tRNA_tgt"/>
    <property type="match status" value="1"/>
</dbReference>
<dbReference type="NCBIfam" id="TIGR00449">
    <property type="entry name" value="tgt_general"/>
    <property type="match status" value="1"/>
</dbReference>
<dbReference type="PANTHER" id="PTHR46499">
    <property type="entry name" value="QUEUINE TRNA-RIBOSYLTRANSFERASE"/>
    <property type="match status" value="1"/>
</dbReference>
<dbReference type="PANTHER" id="PTHR46499:SF1">
    <property type="entry name" value="QUEUINE TRNA-RIBOSYLTRANSFERASE"/>
    <property type="match status" value="1"/>
</dbReference>
<dbReference type="Pfam" id="PF01702">
    <property type="entry name" value="TGT"/>
    <property type="match status" value="1"/>
</dbReference>
<dbReference type="SUPFAM" id="SSF51713">
    <property type="entry name" value="tRNA-guanine transglycosylase"/>
    <property type="match status" value="1"/>
</dbReference>
<feature type="chain" id="PRO_0000135444" description="Queuine tRNA-ribosyltransferase">
    <location>
        <begin position="1"/>
        <end position="379"/>
    </location>
</feature>
<feature type="region of interest" description="RNA binding" evidence="1">
    <location>
        <begin position="249"/>
        <end position="255"/>
    </location>
</feature>
<feature type="region of interest" description="RNA binding; important for wobble base 34 recognition" evidence="1">
    <location>
        <begin position="273"/>
        <end position="277"/>
    </location>
</feature>
<feature type="active site" description="Proton acceptor" evidence="1">
    <location>
        <position position="94"/>
    </location>
</feature>
<feature type="active site" description="Nucleophile" evidence="1">
    <location>
        <position position="268"/>
    </location>
</feature>
<feature type="binding site" evidence="1">
    <location>
        <begin position="94"/>
        <end position="98"/>
    </location>
    <ligand>
        <name>substrate</name>
    </ligand>
</feature>
<feature type="binding site" evidence="1">
    <location>
        <position position="148"/>
    </location>
    <ligand>
        <name>substrate</name>
    </ligand>
</feature>
<feature type="binding site" evidence="1">
    <location>
        <position position="191"/>
    </location>
    <ligand>
        <name>substrate</name>
    </ligand>
</feature>
<feature type="binding site" evidence="1">
    <location>
        <position position="218"/>
    </location>
    <ligand>
        <name>substrate</name>
    </ligand>
</feature>
<feature type="binding site" evidence="1">
    <location>
        <position position="306"/>
    </location>
    <ligand>
        <name>Zn(2+)</name>
        <dbReference type="ChEBI" id="CHEBI:29105"/>
    </ligand>
</feature>
<feature type="binding site" evidence="1">
    <location>
        <position position="308"/>
    </location>
    <ligand>
        <name>Zn(2+)</name>
        <dbReference type="ChEBI" id="CHEBI:29105"/>
    </ligand>
</feature>
<feature type="binding site" evidence="1">
    <location>
        <position position="311"/>
    </location>
    <ligand>
        <name>Zn(2+)</name>
        <dbReference type="ChEBI" id="CHEBI:29105"/>
    </ligand>
</feature>
<feature type="binding site" evidence="1">
    <location>
        <position position="337"/>
    </location>
    <ligand>
        <name>Zn(2+)</name>
        <dbReference type="ChEBI" id="CHEBI:29105"/>
    </ligand>
</feature>
<keyword id="KW-0328">Glycosyltransferase</keyword>
<keyword id="KW-0479">Metal-binding</keyword>
<keyword id="KW-0671">Queuosine biosynthesis</keyword>
<keyword id="KW-1185">Reference proteome</keyword>
<keyword id="KW-0808">Transferase</keyword>
<keyword id="KW-0819">tRNA processing</keyword>
<keyword id="KW-0862">Zinc</keyword>
<protein>
    <recommendedName>
        <fullName evidence="1">Queuine tRNA-ribosyltransferase</fullName>
        <ecNumber evidence="1">2.4.2.29</ecNumber>
    </recommendedName>
    <alternativeName>
        <fullName evidence="1">Guanine insertion enzyme</fullName>
    </alternativeName>
    <alternativeName>
        <fullName evidence="1">tRNA-guanine transglycosylase</fullName>
    </alternativeName>
</protein>
<evidence type="ECO:0000255" key="1">
    <source>
        <dbReference type="HAMAP-Rule" id="MF_00168"/>
    </source>
</evidence>
<reference key="1">
    <citation type="journal article" date="2003" name="Nature">
        <title>The genome sequence of Bacillus anthracis Ames and comparison to closely related bacteria.</title>
        <authorList>
            <person name="Read T.D."/>
            <person name="Peterson S.N."/>
            <person name="Tourasse N.J."/>
            <person name="Baillie L.W."/>
            <person name="Paulsen I.T."/>
            <person name="Nelson K.E."/>
            <person name="Tettelin H."/>
            <person name="Fouts D.E."/>
            <person name="Eisen J.A."/>
            <person name="Gill S.R."/>
            <person name="Holtzapple E.K."/>
            <person name="Okstad O.A."/>
            <person name="Helgason E."/>
            <person name="Rilstone J."/>
            <person name="Wu M."/>
            <person name="Kolonay J.F."/>
            <person name="Beanan M.J."/>
            <person name="Dodson R.J."/>
            <person name="Brinkac L.M."/>
            <person name="Gwinn M.L."/>
            <person name="DeBoy R.T."/>
            <person name="Madpu R."/>
            <person name="Daugherty S.C."/>
            <person name="Durkin A.S."/>
            <person name="Haft D.H."/>
            <person name="Nelson W.C."/>
            <person name="Peterson J.D."/>
            <person name="Pop M."/>
            <person name="Khouri H.M."/>
            <person name="Radune D."/>
            <person name="Benton J.L."/>
            <person name="Mahamoud Y."/>
            <person name="Jiang L."/>
            <person name="Hance I.R."/>
            <person name="Weidman J.F."/>
            <person name="Berry K.J."/>
            <person name="Plaut R.D."/>
            <person name="Wolf A.M."/>
            <person name="Watkins K.L."/>
            <person name="Nierman W.C."/>
            <person name="Hazen A."/>
            <person name="Cline R.T."/>
            <person name="Redmond C."/>
            <person name="Thwaite J.E."/>
            <person name="White O."/>
            <person name="Salzberg S.L."/>
            <person name="Thomason B."/>
            <person name="Friedlander A.M."/>
            <person name="Koehler T.M."/>
            <person name="Hanna P.C."/>
            <person name="Kolstoe A.-B."/>
            <person name="Fraser C.M."/>
        </authorList>
    </citation>
    <scope>NUCLEOTIDE SEQUENCE [LARGE SCALE GENOMIC DNA]</scope>
    <source>
        <strain>Ames / isolate Porton</strain>
    </source>
</reference>
<reference key="2">
    <citation type="journal article" date="2009" name="J. Bacteriol.">
        <title>The complete genome sequence of Bacillus anthracis Ames 'Ancestor'.</title>
        <authorList>
            <person name="Ravel J."/>
            <person name="Jiang L."/>
            <person name="Stanley S.T."/>
            <person name="Wilson M.R."/>
            <person name="Decker R.S."/>
            <person name="Read T.D."/>
            <person name="Worsham P."/>
            <person name="Keim P.S."/>
            <person name="Salzberg S.L."/>
            <person name="Fraser-Liggett C.M."/>
            <person name="Rasko D.A."/>
        </authorList>
    </citation>
    <scope>NUCLEOTIDE SEQUENCE [LARGE SCALE GENOMIC DNA]</scope>
    <source>
        <strain>Ames ancestor</strain>
    </source>
</reference>
<reference key="3">
    <citation type="submission" date="2004-01" db="EMBL/GenBank/DDBJ databases">
        <title>Complete genome sequence of Bacillus anthracis Sterne.</title>
        <authorList>
            <person name="Brettin T.S."/>
            <person name="Bruce D."/>
            <person name="Challacombe J.F."/>
            <person name="Gilna P."/>
            <person name="Han C."/>
            <person name="Hill K."/>
            <person name="Hitchcock P."/>
            <person name="Jackson P."/>
            <person name="Keim P."/>
            <person name="Longmire J."/>
            <person name="Lucas S."/>
            <person name="Okinaka R."/>
            <person name="Richardson P."/>
            <person name="Rubin E."/>
            <person name="Tice H."/>
        </authorList>
    </citation>
    <scope>NUCLEOTIDE SEQUENCE [LARGE SCALE GENOMIC DNA]</scope>
    <source>
        <strain>Sterne</strain>
    </source>
</reference>
<proteinExistence type="inferred from homology"/>